<keyword id="KW-0285">Flavoprotein</keyword>
<keyword id="KW-0288">FMN</keyword>
<keyword id="KW-0560">Oxidoreductase</keyword>
<keyword id="KW-0664">Pyridoxine biosynthesis</keyword>
<dbReference type="EC" id="1.4.3.5" evidence="1"/>
<dbReference type="EMBL" id="CP000790">
    <property type="protein sequence ID" value="ABU74964.1"/>
    <property type="molecule type" value="Genomic_DNA"/>
</dbReference>
<dbReference type="RefSeq" id="WP_012130394.1">
    <property type="nucleotide sequence ID" value="NC_009784.1"/>
</dbReference>
<dbReference type="SMR" id="A7N7P0"/>
<dbReference type="KEGG" id="vha:VIBHAR_07092"/>
<dbReference type="PATRIC" id="fig|338187.25.peg.5479"/>
<dbReference type="UniPathway" id="UPA01068">
    <property type="reaction ID" value="UER00304"/>
</dbReference>
<dbReference type="UniPathway" id="UPA01068">
    <property type="reaction ID" value="UER00305"/>
</dbReference>
<dbReference type="Proteomes" id="UP000008152">
    <property type="component" value="Chromosome II"/>
</dbReference>
<dbReference type="GO" id="GO:0010181">
    <property type="term" value="F:FMN binding"/>
    <property type="evidence" value="ECO:0007669"/>
    <property type="project" value="UniProtKB-UniRule"/>
</dbReference>
<dbReference type="GO" id="GO:0004733">
    <property type="term" value="F:pyridoxamine phosphate oxidase activity"/>
    <property type="evidence" value="ECO:0007669"/>
    <property type="project" value="UniProtKB-UniRule"/>
</dbReference>
<dbReference type="GO" id="GO:0008615">
    <property type="term" value="P:pyridoxine biosynthetic process"/>
    <property type="evidence" value="ECO:0007669"/>
    <property type="project" value="UniProtKB-KW"/>
</dbReference>
<dbReference type="Gene3D" id="2.30.110.10">
    <property type="entry name" value="Electron Transport, Fmn-binding Protein, Chain A"/>
    <property type="match status" value="1"/>
</dbReference>
<dbReference type="HAMAP" id="MF_01629">
    <property type="entry name" value="PdxH"/>
    <property type="match status" value="1"/>
</dbReference>
<dbReference type="InterPro" id="IPR000659">
    <property type="entry name" value="Pyridox_Oxase"/>
</dbReference>
<dbReference type="InterPro" id="IPR019740">
    <property type="entry name" value="Pyridox_Oxase_CS"/>
</dbReference>
<dbReference type="InterPro" id="IPR011576">
    <property type="entry name" value="Pyridox_Oxase_N"/>
</dbReference>
<dbReference type="InterPro" id="IPR019576">
    <property type="entry name" value="Pyridoxamine_oxidase_dimer_C"/>
</dbReference>
<dbReference type="InterPro" id="IPR012349">
    <property type="entry name" value="Split_barrel_FMN-bd"/>
</dbReference>
<dbReference type="NCBIfam" id="TIGR00558">
    <property type="entry name" value="pdxH"/>
    <property type="match status" value="1"/>
</dbReference>
<dbReference type="NCBIfam" id="NF004231">
    <property type="entry name" value="PRK05679.1"/>
    <property type="match status" value="1"/>
</dbReference>
<dbReference type="PANTHER" id="PTHR10851:SF0">
    <property type="entry name" value="PYRIDOXINE-5'-PHOSPHATE OXIDASE"/>
    <property type="match status" value="1"/>
</dbReference>
<dbReference type="PANTHER" id="PTHR10851">
    <property type="entry name" value="PYRIDOXINE-5-PHOSPHATE OXIDASE"/>
    <property type="match status" value="1"/>
</dbReference>
<dbReference type="Pfam" id="PF10590">
    <property type="entry name" value="PNP_phzG_C"/>
    <property type="match status" value="1"/>
</dbReference>
<dbReference type="Pfam" id="PF01243">
    <property type="entry name" value="PNPOx_N"/>
    <property type="match status" value="1"/>
</dbReference>
<dbReference type="PIRSF" id="PIRSF000190">
    <property type="entry name" value="Pyd_amn-ph_oxd"/>
    <property type="match status" value="1"/>
</dbReference>
<dbReference type="SUPFAM" id="SSF50475">
    <property type="entry name" value="FMN-binding split barrel"/>
    <property type="match status" value="1"/>
</dbReference>
<dbReference type="PROSITE" id="PS01064">
    <property type="entry name" value="PYRIDOX_OXIDASE"/>
    <property type="match status" value="1"/>
</dbReference>
<name>PDXH_VIBC1</name>
<sequence length="211" mass="24175">MELADIRREYTKGGLRRKDLKADPIDQFNLWLEQAVQAGMTDPTAMTVATVDENGMPFQRIVLLKSVDKDGFVFYTNLGSRKAQQLGHNSNISLHFPWHPLERQVHITGVAEKLTPMENMKYFTSRPKESQLAAIASKQSSRISARGVLEGKFLELKQKFAKGEIPMPTFWGGFRVKPQSIEFWQGGEHRLHDRFLFSNQEGEWDIDRLAP</sequence>
<reference key="1">
    <citation type="submission" date="2007-08" db="EMBL/GenBank/DDBJ databases">
        <authorList>
            <consortium name="The Vibrio harveyi Genome Sequencing Project"/>
            <person name="Bassler B."/>
            <person name="Clifton S.W."/>
            <person name="Fulton L."/>
            <person name="Delehaunty K."/>
            <person name="Fronick C."/>
            <person name="Harrison M."/>
            <person name="Markivic C."/>
            <person name="Fulton R."/>
            <person name="Tin-Wollam A.-M."/>
            <person name="Shah N."/>
            <person name="Pepin K."/>
            <person name="Nash W."/>
            <person name="Thiruvilangam P."/>
            <person name="Bhonagiri V."/>
            <person name="Waters C."/>
            <person name="Tu K.C."/>
            <person name="Irgon J."/>
            <person name="Wilson R.K."/>
        </authorList>
    </citation>
    <scope>NUCLEOTIDE SEQUENCE [LARGE SCALE GENOMIC DNA]</scope>
    <source>
        <strain>ATCC BAA-1116 / BB120</strain>
    </source>
</reference>
<proteinExistence type="inferred from homology"/>
<gene>
    <name evidence="1" type="primary">pdxH</name>
    <name type="ordered locus">VIBHAR_07092</name>
</gene>
<protein>
    <recommendedName>
        <fullName evidence="1">Pyridoxine/pyridoxamine 5'-phosphate oxidase</fullName>
        <ecNumber evidence="1">1.4.3.5</ecNumber>
    </recommendedName>
    <alternativeName>
        <fullName evidence="1">PNP/PMP oxidase</fullName>
        <shortName evidence="1">PNPOx</shortName>
    </alternativeName>
    <alternativeName>
        <fullName evidence="1">Pyridoxal 5'-phosphate synthase</fullName>
    </alternativeName>
</protein>
<feature type="chain" id="PRO_1000069704" description="Pyridoxine/pyridoxamine 5'-phosphate oxidase">
    <location>
        <begin position="1"/>
        <end position="211"/>
    </location>
</feature>
<feature type="binding site" evidence="1">
    <location>
        <begin position="7"/>
        <end position="10"/>
    </location>
    <ligand>
        <name>substrate</name>
    </ligand>
</feature>
<feature type="binding site" evidence="1">
    <location>
        <begin position="60"/>
        <end position="65"/>
    </location>
    <ligand>
        <name>FMN</name>
        <dbReference type="ChEBI" id="CHEBI:58210"/>
    </ligand>
</feature>
<feature type="binding site" evidence="1">
    <location>
        <position position="65"/>
    </location>
    <ligand>
        <name>substrate</name>
    </ligand>
</feature>
<feature type="binding site" evidence="1">
    <location>
        <begin position="75"/>
        <end position="76"/>
    </location>
    <ligand>
        <name>FMN</name>
        <dbReference type="ChEBI" id="CHEBI:58210"/>
    </ligand>
</feature>
<feature type="binding site" evidence="1">
    <location>
        <position position="81"/>
    </location>
    <ligand>
        <name>FMN</name>
        <dbReference type="ChEBI" id="CHEBI:58210"/>
    </ligand>
</feature>
<feature type="binding site" evidence="1">
    <location>
        <position position="82"/>
    </location>
    <ligand>
        <name>FMN</name>
        <dbReference type="ChEBI" id="CHEBI:58210"/>
    </ligand>
</feature>
<feature type="binding site" evidence="1">
    <location>
        <position position="104"/>
    </location>
    <ligand>
        <name>FMN</name>
        <dbReference type="ChEBI" id="CHEBI:58210"/>
    </ligand>
</feature>
<feature type="binding site" evidence="1">
    <location>
        <position position="122"/>
    </location>
    <ligand>
        <name>substrate</name>
    </ligand>
</feature>
<feature type="binding site" evidence="1">
    <location>
        <position position="126"/>
    </location>
    <ligand>
        <name>substrate</name>
    </ligand>
</feature>
<feature type="binding site" evidence="1">
    <location>
        <position position="130"/>
    </location>
    <ligand>
        <name>substrate</name>
    </ligand>
</feature>
<feature type="binding site" evidence="1">
    <location>
        <begin position="139"/>
        <end position="140"/>
    </location>
    <ligand>
        <name>FMN</name>
        <dbReference type="ChEBI" id="CHEBI:58210"/>
    </ligand>
</feature>
<feature type="binding site" evidence="1">
    <location>
        <position position="184"/>
    </location>
    <ligand>
        <name>FMN</name>
        <dbReference type="ChEBI" id="CHEBI:58210"/>
    </ligand>
</feature>
<feature type="binding site" evidence="1">
    <location>
        <begin position="190"/>
        <end position="192"/>
    </location>
    <ligand>
        <name>substrate</name>
    </ligand>
</feature>
<feature type="binding site" evidence="1">
    <location>
        <position position="194"/>
    </location>
    <ligand>
        <name>FMN</name>
        <dbReference type="ChEBI" id="CHEBI:58210"/>
    </ligand>
</feature>
<evidence type="ECO:0000255" key="1">
    <source>
        <dbReference type="HAMAP-Rule" id="MF_01629"/>
    </source>
</evidence>
<accession>A7N7P0</accession>
<organism>
    <name type="scientific">Vibrio campbellii (strain ATCC BAA-1116)</name>
    <dbReference type="NCBI Taxonomy" id="2902295"/>
    <lineage>
        <taxon>Bacteria</taxon>
        <taxon>Pseudomonadati</taxon>
        <taxon>Pseudomonadota</taxon>
        <taxon>Gammaproteobacteria</taxon>
        <taxon>Vibrionales</taxon>
        <taxon>Vibrionaceae</taxon>
        <taxon>Vibrio</taxon>
    </lineage>
</organism>
<comment type="function">
    <text evidence="1">Catalyzes the oxidation of either pyridoxine 5'-phosphate (PNP) or pyridoxamine 5'-phosphate (PMP) into pyridoxal 5'-phosphate (PLP).</text>
</comment>
<comment type="catalytic activity">
    <reaction evidence="1">
        <text>pyridoxamine 5'-phosphate + O2 + H2O = pyridoxal 5'-phosphate + H2O2 + NH4(+)</text>
        <dbReference type="Rhea" id="RHEA:15817"/>
        <dbReference type="ChEBI" id="CHEBI:15377"/>
        <dbReference type="ChEBI" id="CHEBI:15379"/>
        <dbReference type="ChEBI" id="CHEBI:16240"/>
        <dbReference type="ChEBI" id="CHEBI:28938"/>
        <dbReference type="ChEBI" id="CHEBI:58451"/>
        <dbReference type="ChEBI" id="CHEBI:597326"/>
        <dbReference type="EC" id="1.4.3.5"/>
    </reaction>
</comment>
<comment type="catalytic activity">
    <reaction evidence="1">
        <text>pyridoxine 5'-phosphate + O2 = pyridoxal 5'-phosphate + H2O2</text>
        <dbReference type="Rhea" id="RHEA:15149"/>
        <dbReference type="ChEBI" id="CHEBI:15379"/>
        <dbReference type="ChEBI" id="CHEBI:16240"/>
        <dbReference type="ChEBI" id="CHEBI:58589"/>
        <dbReference type="ChEBI" id="CHEBI:597326"/>
        <dbReference type="EC" id="1.4.3.5"/>
    </reaction>
</comment>
<comment type="cofactor">
    <cofactor evidence="1">
        <name>FMN</name>
        <dbReference type="ChEBI" id="CHEBI:58210"/>
    </cofactor>
    <text evidence="1">Binds 1 FMN per subunit.</text>
</comment>
<comment type="pathway">
    <text evidence="1">Cofactor metabolism; pyridoxal 5'-phosphate salvage; pyridoxal 5'-phosphate from pyridoxamine 5'-phosphate: step 1/1.</text>
</comment>
<comment type="pathway">
    <text evidence="1">Cofactor metabolism; pyridoxal 5'-phosphate salvage; pyridoxal 5'-phosphate from pyridoxine 5'-phosphate: step 1/1.</text>
</comment>
<comment type="subunit">
    <text evidence="1">Homodimer.</text>
</comment>
<comment type="similarity">
    <text evidence="1">Belongs to the pyridoxamine 5'-phosphate oxidase family.</text>
</comment>